<proteinExistence type="inferred from homology"/>
<organismHost>
    <name type="scientific">Cucumis sativus</name>
    <name type="common">Cucumber</name>
    <dbReference type="NCBI Taxonomy" id="3659"/>
</organismHost>
<organismHost>
    <name type="scientific">Solanum lycopersicum</name>
    <name type="common">Tomato</name>
    <name type="synonym">Lycopersicon esculentum</name>
    <dbReference type="NCBI Taxonomy" id="4081"/>
</organismHost>
<organismHost>
    <name type="scientific">Spinacia oleracea</name>
    <name type="common">Spinach</name>
    <dbReference type="NCBI Taxonomy" id="3562"/>
</organismHost>
<protein>
    <recommendedName>
        <fullName>Capsid protein</fullName>
        <shortName>CP</shortName>
    </recommendedName>
    <alternativeName>
        <fullName>Coat protein</fullName>
    </alternativeName>
</protein>
<accession>Q66138</accession>
<reference key="1">
    <citation type="journal article" date="1996" name="Nihon Shokubutsu Byori Gakkaiho">
        <title>Six new subgroup I members of Japanese cucumber mosaic virus as determined by nucleotide sequence analysis on RNA3's cDNAs.</title>
        <authorList>
            <person name="Chaumpluk P."/>
            <person name="Sasaki Y."/>
            <person name="Nakajima N."/>
            <person name="Nagano H."/>
            <person name="Nakamura I."/>
            <person name="Suzuki K."/>
            <person name="Mise K."/>
            <person name="Inouye N."/>
            <person name="Okuno T."/>
            <person name="Furusawa I."/>
        </authorList>
    </citation>
    <scope>NUCLEOTIDE SEQUENCE [GENOMIC RNA]</scope>
</reference>
<organism>
    <name type="scientific">Cucumber mosaic virus (strain N)</name>
    <name type="common">CMV</name>
    <dbReference type="NCBI Taxonomy" id="117123"/>
    <lineage>
        <taxon>Viruses</taxon>
        <taxon>Riboviria</taxon>
        <taxon>Orthornavirae</taxon>
        <taxon>Kitrinoviricota</taxon>
        <taxon>Alsuviricetes</taxon>
        <taxon>Martellivirales</taxon>
        <taxon>Bromoviridae</taxon>
        <taxon>Cucumovirus</taxon>
        <taxon>Cucumber mosaic virus</taxon>
    </lineage>
</organism>
<feature type="chain" id="PRO_0000083213" description="Capsid protein">
    <location>
        <begin position="1"/>
        <end position="218"/>
    </location>
</feature>
<feature type="region of interest" description="Disordered" evidence="2">
    <location>
        <begin position="1"/>
        <end position="30"/>
    </location>
</feature>
<feature type="compositionally biased region" description="Low complexity" evidence="2">
    <location>
        <begin position="1"/>
        <end position="10"/>
    </location>
</feature>
<feature type="compositionally biased region" description="Basic residues" evidence="2">
    <location>
        <begin position="11"/>
        <end position="21"/>
    </location>
</feature>
<feature type="modified residue" description="N-acetylmethionine; by host" evidence="1">
    <location>
        <position position="1"/>
    </location>
</feature>
<gene>
    <name type="ORF">ORF3b</name>
</gene>
<name>CAPSD_CMVN</name>
<dbReference type="EMBL" id="D28486">
    <property type="protein sequence ID" value="BAA05845.1"/>
    <property type="molecule type" value="Genomic_RNA"/>
</dbReference>
<dbReference type="SMR" id="Q66138"/>
<dbReference type="GO" id="GO:1990904">
    <property type="term" value="C:ribonucleoprotein complex"/>
    <property type="evidence" value="ECO:0007669"/>
    <property type="project" value="UniProtKB-KW"/>
</dbReference>
<dbReference type="GO" id="GO:0039617">
    <property type="term" value="C:T=3 icosahedral viral capsid"/>
    <property type="evidence" value="ECO:0007669"/>
    <property type="project" value="UniProtKB-KW"/>
</dbReference>
<dbReference type="GO" id="GO:0019013">
    <property type="term" value="C:viral nucleocapsid"/>
    <property type="evidence" value="ECO:0007669"/>
    <property type="project" value="UniProtKB-KW"/>
</dbReference>
<dbReference type="GO" id="GO:0003723">
    <property type="term" value="F:RNA binding"/>
    <property type="evidence" value="ECO:0007669"/>
    <property type="project" value="UniProtKB-KW"/>
</dbReference>
<dbReference type="GO" id="GO:0005198">
    <property type="term" value="F:structural molecule activity"/>
    <property type="evidence" value="ECO:0007669"/>
    <property type="project" value="InterPro"/>
</dbReference>
<dbReference type="Gene3D" id="2.60.120.530">
    <property type="entry name" value="Cucumovirus coat protein, subunit A"/>
    <property type="match status" value="1"/>
</dbReference>
<dbReference type="InterPro" id="IPR000247">
    <property type="entry name" value="Cucumovirus_coat"/>
</dbReference>
<dbReference type="InterPro" id="IPR037137">
    <property type="entry name" value="Cucumovirus_coat_Asu_sf"/>
</dbReference>
<dbReference type="Pfam" id="PF00760">
    <property type="entry name" value="Cucumo_coat"/>
    <property type="match status" value="1"/>
</dbReference>
<dbReference type="PRINTS" id="PR00222">
    <property type="entry name" value="CUCUMOCOAT"/>
</dbReference>
<dbReference type="SUPFAM" id="SSF88633">
    <property type="entry name" value="Positive stranded ssRNA viruses"/>
    <property type="match status" value="1"/>
</dbReference>
<sequence>MDKSESTSAGRNRRRRPRRGSRSASSSSDANFRVLSQQLSRLNKTLAAGRPTINHPTFVGSERCKPGYTFTSITLKPPKIDRGSYYGKRLLLPDSVTEYDKKLVSRIQIRVNPLPKFDSTVWVTVRKVPASSDLSVAAISAMFADGASPVLVHQYAASGVQANNKLLYDLSAMRADIGDMRKYAVLVYSKDDALETDELVLHVDVEHQRIPTSGVLPV</sequence>
<comment type="function">
    <text evidence="1">Capsid protein. Probably binds RNA and plays a role in packaging (By similarity).</text>
</comment>
<comment type="subcellular location">
    <subcellularLocation>
        <location evidence="3">Virion</location>
    </subcellularLocation>
</comment>
<comment type="domain">
    <text evidence="1">The N-terminal arginine-rich stretch does not seem to be the major RNA-binding region that allows formation of an infectious ribonucleoprotein complex.</text>
</comment>
<comment type="similarity">
    <text evidence="3">Belongs to the cucumovirus capsid protein family.</text>
</comment>
<keyword id="KW-0007">Acetylation</keyword>
<keyword id="KW-0167">Capsid protein</keyword>
<keyword id="KW-0687">Ribonucleoprotein</keyword>
<keyword id="KW-0694">RNA-binding</keyword>
<keyword id="KW-1142">T=3 icosahedral capsid protein</keyword>
<keyword id="KW-0543">Viral nucleoprotein</keyword>
<keyword id="KW-0946">Virion</keyword>
<evidence type="ECO:0000250" key="1"/>
<evidence type="ECO:0000256" key="2">
    <source>
        <dbReference type="SAM" id="MobiDB-lite"/>
    </source>
</evidence>
<evidence type="ECO:0000305" key="3"/>